<accession>P16272</accession>
<accession>Q76ZM8</accession>
<keyword id="KW-0067">ATP-binding</keyword>
<keyword id="KW-0131">Cell cycle</keyword>
<keyword id="KW-0132">Cell division</keyword>
<keyword id="KW-0227">DNA damage</keyword>
<keyword id="KW-0233">DNA recombination</keyword>
<keyword id="KW-0234">DNA repair</keyword>
<keyword id="KW-0235">DNA replication</keyword>
<keyword id="KW-0244">Early protein</keyword>
<keyword id="KW-1035">Host cytoplasm</keyword>
<keyword id="KW-0436">Ligase</keyword>
<keyword id="KW-0460">Magnesium</keyword>
<keyword id="KW-0479">Metal-binding</keyword>
<keyword id="KW-0547">Nucleotide-binding</keyword>
<keyword id="KW-1185">Reference proteome</keyword>
<feature type="chain" id="PRO_0000059589" description="DNA ligase">
    <location>
        <begin position="1"/>
        <end position="552"/>
    </location>
</feature>
<feature type="active site" description="N6-AMP-lysine intermediate" evidence="2">
    <location>
        <position position="231"/>
    </location>
</feature>
<feature type="binding site" evidence="1">
    <location>
        <position position="229"/>
    </location>
    <ligand>
        <name>ATP</name>
        <dbReference type="ChEBI" id="CHEBI:30616"/>
    </ligand>
</feature>
<feature type="binding site" evidence="1">
    <location>
        <position position="236"/>
    </location>
    <ligand>
        <name>ATP</name>
        <dbReference type="ChEBI" id="CHEBI:30616"/>
    </ligand>
</feature>
<feature type="binding site" evidence="1">
    <location>
        <position position="283"/>
    </location>
    <ligand>
        <name>ATP</name>
        <dbReference type="ChEBI" id="CHEBI:30616"/>
    </ligand>
</feature>
<feature type="binding site" evidence="1">
    <location>
        <position position="283"/>
    </location>
    <ligand>
        <name>Mg(2+)</name>
        <dbReference type="ChEBI" id="CHEBI:18420"/>
        <label>1</label>
    </ligand>
</feature>
<feature type="binding site" evidence="1">
    <location>
        <position position="377"/>
    </location>
    <ligand>
        <name>Mg(2+)</name>
        <dbReference type="ChEBI" id="CHEBI:18420"/>
        <label>2</label>
    </ligand>
</feature>
<feature type="binding site" evidence="1">
    <location>
        <position position="382"/>
    </location>
    <ligand>
        <name>ATP</name>
        <dbReference type="ChEBI" id="CHEBI:30616"/>
    </ligand>
</feature>
<feature type="binding site" evidence="1">
    <location>
        <position position="397"/>
    </location>
    <ligand>
        <name>ATP</name>
        <dbReference type="ChEBI" id="CHEBI:30616"/>
    </ligand>
</feature>
<comment type="function">
    <text evidence="3 4">DNA ligase that seals nicks in double-stranded DNA during DNA replication, DNA recombination and DNA repair. Recruits cellular topoisomerase II to sites of viral replication and assembly (PubMed:18417590). Contributes to the repair of the viral genome following UV irradiation (PubMed:35404095).</text>
</comment>
<comment type="catalytic activity">
    <reaction evidence="2">
        <text>ATP + (deoxyribonucleotide)n-3'-hydroxyl + 5'-phospho-(deoxyribonucleotide)m = (deoxyribonucleotide)n+m + AMP + diphosphate.</text>
        <dbReference type="EC" id="6.5.1.1"/>
    </reaction>
</comment>
<comment type="cofactor">
    <cofactor evidence="1">
        <name>Mg(2+)</name>
        <dbReference type="ChEBI" id="CHEBI:18420"/>
    </cofactor>
</comment>
<comment type="subunit">
    <text evidence="3">Interacts with host TOP2A and TOP2B.</text>
</comment>
<comment type="subcellular location">
    <subcellularLocation>
        <location evidence="3">Host cytoplasm</location>
    </subcellularLocation>
    <text>Found in sites viral of replication and assembly.</text>
</comment>
<comment type="induction">
    <text>Expressed in the early phase of the viral replicative cycle.</text>
</comment>
<comment type="similarity">
    <text evidence="5">Belongs to the ATP-dependent DNA ligase family.</text>
</comment>
<name>DNLI_VACCW</name>
<proteinExistence type="evidence at protein level"/>
<protein>
    <recommendedName>
        <fullName>DNA ligase</fullName>
        <ecNumber evidence="2">6.5.1.1</ecNumber>
    </recommendedName>
    <alternativeName>
        <fullName>Polydeoxyribonucleotide synthase [ATP]</fullName>
    </alternativeName>
</protein>
<organism>
    <name type="scientific">Vaccinia virus (strain Western Reserve)</name>
    <name type="common">VACV</name>
    <name type="synonym">Vaccinia virus (strain WR)</name>
    <dbReference type="NCBI Taxonomy" id="10254"/>
    <lineage>
        <taxon>Viruses</taxon>
        <taxon>Varidnaviria</taxon>
        <taxon>Bamfordvirae</taxon>
        <taxon>Nucleocytoviricota</taxon>
        <taxon>Pokkesviricetes</taxon>
        <taxon>Chitovirales</taxon>
        <taxon>Poxviridae</taxon>
        <taxon>Chordopoxvirinae</taxon>
        <taxon>Orthopoxvirus</taxon>
        <taxon>Vaccinia virus</taxon>
    </lineage>
</organism>
<organismHost>
    <name type="scientific">Bos taurus</name>
    <name type="common">Bovine</name>
    <dbReference type="NCBI Taxonomy" id="9913"/>
</organismHost>
<gene>
    <name type="primary">OPG180</name>
    <name type="synonym">LIG</name>
    <name type="ordered locus">VACWR176</name>
    <name type="ORF">A50R</name>
</gene>
<reference key="1">
    <citation type="journal article" date="1991" name="J. Gen. Virol.">
        <title>Nucleotide sequence of 42 kbp of vaccinia virus strain WR from near the right inverted terminal repeat.</title>
        <authorList>
            <person name="Smith G.L."/>
            <person name="Chan Y.S."/>
            <person name="Howard S.T."/>
        </authorList>
    </citation>
    <scope>NUCLEOTIDE SEQUENCE [GENOMIC DNA]</scope>
</reference>
<reference key="2">
    <citation type="journal article" date="1989" name="Nucleic Acids Res.">
        <title>Transcriptional mapping and nucleotide sequence of a vaccinia virus gene encoding a polypeptide with extensive homology to DNA ligases.</title>
        <authorList>
            <person name="Smith G.L."/>
            <person name="Chan Y.S."/>
            <person name="Kerr S.M."/>
        </authorList>
    </citation>
    <scope>NUCLEOTIDE SEQUENCE [GENOMIC DNA]</scope>
</reference>
<reference key="3">
    <citation type="submission" date="2003-02" db="EMBL/GenBank/DDBJ databases">
        <title>Sequencing of the coding region of Vaccinia-WR to an average 9-fold redundancy and an error rate of 0.16/10kb.</title>
        <authorList>
            <person name="Esposito J.J."/>
            <person name="Frace A.M."/>
            <person name="Sammons S.A."/>
            <person name="Olsen-Rasmussen M."/>
            <person name="Osborne J."/>
            <person name="Wohlhueter R."/>
        </authorList>
    </citation>
    <scope>NUCLEOTIDE SEQUENCE [LARGE SCALE GENOMIC DNA]</scope>
</reference>
<reference key="4">
    <citation type="journal article" date="1989" name="Nucleic Acids Res.">
        <title>Vaccinia virus encodes a polypeptide with DNA ligase activity.</title>
        <authorList>
            <person name="Kerr S.M."/>
            <person name="Smith G.L."/>
        </authorList>
    </citation>
    <scope>CHARACTERIZATION</scope>
</reference>
<reference key="5">
    <citation type="journal article" date="1997" name="Nucleic Acids Res.">
        <title>Domain structure of vaccinia DNA ligase.</title>
        <authorList>
            <person name="Sekiguchi J."/>
            <person name="Shuman S."/>
        </authorList>
    </citation>
    <scope>DOMAIN STRUCTURE</scope>
</reference>
<reference key="6">
    <citation type="journal article" date="2008" name="J. Virol.">
        <title>Vaccinia virus DNA ligase recruits cellular topoisomerase II to sites of viral replication and assembly.</title>
        <authorList>
            <person name="Lin Y.C."/>
            <person name="Li J."/>
            <person name="Irwin C.R."/>
            <person name="Jenkins H."/>
            <person name="DeLange L."/>
            <person name="Evans D.H."/>
        </authorList>
    </citation>
    <scope>SUBCELLULAR LOCATION</scope>
    <scope>INTERACTION WITH HOST TOP2A AND TOP2B</scope>
    <scope>FUNCTION</scope>
</reference>
<reference key="7">
    <citation type="journal article" date="2022" name="J. Virol.">
        <title>UV Irradiation of Vaccinia Virus-Infected Cells Impairs Cellular Functions, Introduces Lesions into the Viral Genome, and Uncovers Repair Capabilities for the Viral Replication Machinery.</title>
        <authorList>
            <person name="Templeton C.W."/>
            <person name="Traktman P."/>
        </authorList>
    </citation>
    <scope>FUNCTION</scope>
</reference>
<evidence type="ECO:0000250" key="1">
    <source>
        <dbReference type="UniProtKB" id="P18858"/>
    </source>
</evidence>
<evidence type="ECO:0000255" key="2">
    <source>
        <dbReference type="PROSITE-ProRule" id="PRU10135"/>
    </source>
</evidence>
<evidence type="ECO:0000269" key="3">
    <source>
    </source>
</evidence>
<evidence type="ECO:0000269" key="4">
    <source>
    </source>
</evidence>
<evidence type="ECO:0000305" key="5"/>
<sequence>MTSLREFRKLCCDIYHASGYKEKSKLIRDFITDRDDKYLIIKLLLPGLDDRIYNMNDKQIIKLYSIIFKQSQEDMLQDLGYGYIGDTIRTFFKENTEIRPRDKSILTLEDVDSFLTTLSSVTKESHQIKLLTDIASVCTCNDLKCVVMLIDKDLKIKAGPRYVLNAISPNAYDVFRKSNNLKEIIENASKQNLDSISISVMTPINPMLAESCDSVNKAFKKFPSGMFAEVKYDGERVQVHKNNNEFAFFSRNMKPVLSHKVDYLKEYIPKAFKKATSIVLDSEIVLVDEHNVPLPFGSLGIHKKKEYKNSNMCLFVFDCLYFDGFDMTDIPLYERRSFLKDVMVEIPNRIVFSELTNISNESQLTDVLDDALTRKLEGLVLKDINGVYEPGKRRWLKIKRDYLNEGSMADSADLVVLGAYYGKGAKGGIMAVFLMGCYDDESGKWKTVTKCSGHDDNTLRVLQDQLTMVKINKDPKKIPEWLVVNKIYIPDFVVEDPKQSQIWEISGAEFTSSKSHTANGISIRFPRFTRIREDKTWKESTHLNDLVNLTKS</sequence>
<dbReference type="EC" id="6.5.1.1" evidence="2"/>
<dbReference type="EMBL" id="D11079">
    <property type="protein sequence ID" value="BAA01824.1"/>
    <property type="molecule type" value="Genomic_DNA"/>
</dbReference>
<dbReference type="EMBL" id="X16512">
    <property type="protein sequence ID" value="CAA34519.1"/>
    <property type="molecule type" value="Genomic_DNA"/>
</dbReference>
<dbReference type="EMBL" id="AY243312">
    <property type="protein sequence ID" value="AAO89455.1"/>
    <property type="molecule type" value="Genomic_DNA"/>
</dbReference>
<dbReference type="PIR" id="JQ1788">
    <property type="entry name" value="JQ1788"/>
</dbReference>
<dbReference type="RefSeq" id="YP_233058.1">
    <property type="nucleotide sequence ID" value="NC_006998.1"/>
</dbReference>
<dbReference type="SMR" id="P16272"/>
<dbReference type="GeneID" id="3707705"/>
<dbReference type="KEGG" id="vg:3707705"/>
<dbReference type="Proteomes" id="UP000000344">
    <property type="component" value="Genome"/>
</dbReference>
<dbReference type="GO" id="GO:0030430">
    <property type="term" value="C:host cell cytoplasm"/>
    <property type="evidence" value="ECO:0007669"/>
    <property type="project" value="UniProtKB-SubCell"/>
</dbReference>
<dbReference type="GO" id="GO:0005524">
    <property type="term" value="F:ATP binding"/>
    <property type="evidence" value="ECO:0007669"/>
    <property type="project" value="UniProtKB-KW"/>
</dbReference>
<dbReference type="GO" id="GO:0003677">
    <property type="term" value="F:DNA binding"/>
    <property type="evidence" value="ECO:0007669"/>
    <property type="project" value="InterPro"/>
</dbReference>
<dbReference type="GO" id="GO:0003910">
    <property type="term" value="F:DNA ligase (ATP) activity"/>
    <property type="evidence" value="ECO:0007669"/>
    <property type="project" value="UniProtKB-EC"/>
</dbReference>
<dbReference type="GO" id="GO:0046872">
    <property type="term" value="F:metal ion binding"/>
    <property type="evidence" value="ECO:0007669"/>
    <property type="project" value="UniProtKB-KW"/>
</dbReference>
<dbReference type="GO" id="GO:0051301">
    <property type="term" value="P:cell division"/>
    <property type="evidence" value="ECO:0007669"/>
    <property type="project" value="UniProtKB-KW"/>
</dbReference>
<dbReference type="GO" id="GO:0071897">
    <property type="term" value="P:DNA biosynthetic process"/>
    <property type="evidence" value="ECO:0007669"/>
    <property type="project" value="InterPro"/>
</dbReference>
<dbReference type="GO" id="GO:0006310">
    <property type="term" value="P:DNA recombination"/>
    <property type="evidence" value="ECO:0007669"/>
    <property type="project" value="UniProtKB-KW"/>
</dbReference>
<dbReference type="GO" id="GO:0006302">
    <property type="term" value="P:double-strand break repair"/>
    <property type="evidence" value="ECO:0007669"/>
    <property type="project" value="TreeGrafter"/>
</dbReference>
<dbReference type="GO" id="GO:0006273">
    <property type="term" value="P:lagging strand elongation"/>
    <property type="evidence" value="ECO:0007669"/>
    <property type="project" value="TreeGrafter"/>
</dbReference>
<dbReference type="CDD" id="cd07967">
    <property type="entry name" value="OBF_DNA_ligase_III"/>
    <property type="match status" value="1"/>
</dbReference>
<dbReference type="FunFam" id="2.40.50.140:FF:000085">
    <property type="entry name" value="DNA ligase"/>
    <property type="match status" value="1"/>
</dbReference>
<dbReference type="FunFam" id="3.30.470.30:FF:000003">
    <property type="entry name" value="DNA ligase"/>
    <property type="match status" value="1"/>
</dbReference>
<dbReference type="Gene3D" id="3.30.1490.70">
    <property type="match status" value="1"/>
</dbReference>
<dbReference type="Gene3D" id="1.10.3260.10">
    <property type="entry name" value="DNA ligase, ATP-dependent, N-terminal domain"/>
    <property type="match status" value="1"/>
</dbReference>
<dbReference type="Gene3D" id="3.30.470.30">
    <property type="entry name" value="DNA ligase/mRNA capping enzyme"/>
    <property type="match status" value="1"/>
</dbReference>
<dbReference type="Gene3D" id="2.40.50.140">
    <property type="entry name" value="Nucleic acid-binding proteins"/>
    <property type="match status" value="1"/>
</dbReference>
<dbReference type="InterPro" id="IPR050191">
    <property type="entry name" value="ATP-dep_DNA_ligase"/>
</dbReference>
<dbReference type="InterPro" id="IPR000977">
    <property type="entry name" value="DNA_ligase_ATP-dep"/>
</dbReference>
<dbReference type="InterPro" id="IPR012309">
    <property type="entry name" value="DNA_ligase_ATP-dep_C"/>
</dbReference>
<dbReference type="InterPro" id="IPR012310">
    <property type="entry name" value="DNA_ligase_ATP-dep_cent"/>
</dbReference>
<dbReference type="InterPro" id="IPR016059">
    <property type="entry name" value="DNA_ligase_ATP-dep_CS"/>
</dbReference>
<dbReference type="InterPro" id="IPR012308">
    <property type="entry name" value="DNA_ligase_ATP-dep_N"/>
</dbReference>
<dbReference type="InterPro" id="IPR036599">
    <property type="entry name" value="DNA_ligase_N_sf"/>
</dbReference>
<dbReference type="InterPro" id="IPR012340">
    <property type="entry name" value="NA-bd_OB-fold"/>
</dbReference>
<dbReference type="NCBIfam" id="TIGR00574">
    <property type="entry name" value="dnl1"/>
    <property type="match status" value="1"/>
</dbReference>
<dbReference type="PANTHER" id="PTHR45674">
    <property type="entry name" value="DNA LIGASE 1/3 FAMILY MEMBER"/>
    <property type="match status" value="1"/>
</dbReference>
<dbReference type="PANTHER" id="PTHR45674:SF9">
    <property type="entry name" value="DNA LIGASE 3"/>
    <property type="match status" value="1"/>
</dbReference>
<dbReference type="Pfam" id="PF04679">
    <property type="entry name" value="DNA_ligase_A_C"/>
    <property type="match status" value="1"/>
</dbReference>
<dbReference type="Pfam" id="PF01068">
    <property type="entry name" value="DNA_ligase_A_M"/>
    <property type="match status" value="1"/>
</dbReference>
<dbReference type="Pfam" id="PF04675">
    <property type="entry name" value="DNA_ligase_A_N"/>
    <property type="match status" value="1"/>
</dbReference>
<dbReference type="SUPFAM" id="SSF117018">
    <property type="entry name" value="ATP-dependent DNA ligase DNA-binding domain"/>
    <property type="match status" value="1"/>
</dbReference>
<dbReference type="SUPFAM" id="SSF56091">
    <property type="entry name" value="DNA ligase/mRNA capping enzyme, catalytic domain"/>
    <property type="match status" value="1"/>
</dbReference>
<dbReference type="SUPFAM" id="SSF50249">
    <property type="entry name" value="Nucleic acid-binding proteins"/>
    <property type="match status" value="1"/>
</dbReference>
<dbReference type="PROSITE" id="PS00697">
    <property type="entry name" value="DNA_LIGASE_A1"/>
    <property type="match status" value="1"/>
</dbReference>
<dbReference type="PROSITE" id="PS00333">
    <property type="entry name" value="DNA_LIGASE_A2"/>
    <property type="match status" value="1"/>
</dbReference>
<dbReference type="PROSITE" id="PS50160">
    <property type="entry name" value="DNA_LIGASE_A3"/>
    <property type="match status" value="1"/>
</dbReference>